<sequence>TCLAHKQQAVNRLLYRIYSPIXXXF</sequence>
<protein>
    <recommendedName>
        <fullName>Hemocyanin subunit 2</fullName>
    </recommendedName>
</protein>
<dbReference type="PIR" id="D60529">
    <property type="entry name" value="D60529"/>
</dbReference>
<dbReference type="GO" id="GO:0005576">
    <property type="term" value="C:extracellular region"/>
    <property type="evidence" value="ECO:0007669"/>
    <property type="project" value="UniProtKB-SubCell"/>
</dbReference>
<dbReference type="GO" id="GO:0005344">
    <property type="term" value="F:oxygen carrier activity"/>
    <property type="evidence" value="ECO:0000314"/>
    <property type="project" value="UniProtKB"/>
</dbReference>
<dbReference type="GO" id="GO:0015671">
    <property type="term" value="P:oxygen transport"/>
    <property type="evidence" value="ECO:0000304"/>
    <property type="project" value="UniProtKB"/>
</dbReference>
<feature type="chain" id="PRO_0000204258" description="Hemocyanin subunit 2">
    <location>
        <begin position="1"/>
        <end position="25" status="greater than"/>
    </location>
</feature>
<feature type="unsure residue" evidence="1">
    <location>
        <position position="2"/>
    </location>
</feature>
<feature type="non-terminal residue" evidence="2">
    <location>
        <position position="25"/>
    </location>
</feature>
<keyword id="KW-0186">Copper</keyword>
<keyword id="KW-0903">Direct protein sequencing</keyword>
<keyword id="KW-0561">Oxygen transport</keyword>
<keyword id="KW-0964">Secreted</keyword>
<keyword id="KW-0813">Transport</keyword>
<comment type="function">
    <text evidence="1">Hemocyanins are copper-containing oxygen carriers occurring freely dissolved in the hemolymph of many mollusks and arthropods.</text>
</comment>
<comment type="subcellular location">
    <subcellularLocation>
        <location>Secreted</location>
        <location>Extracellular space</location>
    </subcellularLocation>
</comment>
<comment type="tissue specificity">
    <text>Hemolymph.</text>
</comment>
<comment type="similarity">
    <text evidence="3">Belongs to the tyrosinase family. Hemocyanin subfamily.</text>
</comment>
<name>HCY2_CARMA</name>
<reference evidence="3" key="1">
    <citation type="journal article" date="1989" name="Comp. Biochem. Physiol.">
        <title>The relationship between N-terminal sequences and immunological characterization of crustacean hemocyanins.</title>
        <authorList>
            <person name="Neuteboom B."/>
            <person name="Sierdsema S.J."/>
            <person name="Beintema J.J."/>
        </authorList>
    </citation>
    <scope>PROTEIN SEQUENCE</scope>
    <source>
        <tissue>Hemolymph</tissue>
    </source>
</reference>
<evidence type="ECO:0000269" key="1">
    <source>
    </source>
</evidence>
<evidence type="ECO:0000303" key="2">
    <source>
    </source>
</evidence>
<evidence type="ECO:0000305" key="3"/>
<organism evidence="3">
    <name type="scientific">Carcinus maenas</name>
    <name type="common">Common shore crab</name>
    <name type="synonym">Green crab</name>
    <dbReference type="NCBI Taxonomy" id="6759"/>
    <lineage>
        <taxon>Eukaryota</taxon>
        <taxon>Metazoa</taxon>
        <taxon>Ecdysozoa</taxon>
        <taxon>Arthropoda</taxon>
        <taxon>Crustacea</taxon>
        <taxon>Multicrustacea</taxon>
        <taxon>Malacostraca</taxon>
        <taxon>Eumalacostraca</taxon>
        <taxon>Eucarida</taxon>
        <taxon>Decapoda</taxon>
        <taxon>Pleocyemata</taxon>
        <taxon>Brachyura</taxon>
        <taxon>Eubrachyura</taxon>
        <taxon>Portunoidea</taxon>
        <taxon>Carcinidae</taxon>
        <taxon>Carcinus</taxon>
    </lineage>
</organism>
<proteinExistence type="evidence at protein level"/>
<accession>P83177</accession>